<protein>
    <recommendedName>
        <fullName evidence="1">Proline--tRNA ligase</fullName>
        <ecNumber evidence="1">6.1.1.15</ecNumber>
    </recommendedName>
    <alternativeName>
        <fullName evidence="1">Prolyl-tRNA synthetase</fullName>
        <shortName evidence="1">ProRS</shortName>
    </alternativeName>
</protein>
<sequence length="432" mass="49206">MLLSKYFLPVLKEDPSEAQITSHKLMLRSGMIRQQAAGIYSWLPLGLKVLKNIENIVRSNMDKAGCLEVLMPCIQPAHLWVESGRFDNYGKEMLKFQDRHDNTLLFGPTNEDMVTDIFRNNIKSYKDLPKNLYHIQWKFRDEIRPRFGVMRGREFLMKDAYSFDIDEESAVKTYNQMYKAYINTFRDLGVFAVPVIADNGPIGGKLSHEFHIIAETGESNIYYDKRFKTLKDNPDIDIEEIKSWYAAAEEKHDASKLSSDKEITSSKGIEVGHIFYIGTKYSVNMNALINDEHGKLTPIEMSSYGIGISRLVAAIIEANSDAKGIIWPIAVAPFKISLINLNIHDSKCLELAERVYNELLAQNIEVLYDDTDVRAGSKFATHDLIGSPYQIIIGPKKAANNIVELKNRKNGEIEDIDLNKRALNSYLTFFNS</sequence>
<reference key="1">
    <citation type="journal article" date="2006" name="PLoS Genet.">
        <title>Genome sequence of Rickettsia bellii illuminates the role of amoebae in gene exchanges between intracellular pathogens.</title>
        <authorList>
            <person name="Ogata H."/>
            <person name="La Scola B."/>
            <person name="Audic S."/>
            <person name="Renesto P."/>
            <person name="Blanc G."/>
            <person name="Robert C."/>
            <person name="Fournier P.-E."/>
            <person name="Claverie J.-M."/>
            <person name="Raoult D."/>
        </authorList>
    </citation>
    <scope>NUCLEOTIDE SEQUENCE [LARGE SCALE GENOMIC DNA]</scope>
    <source>
        <strain>RML369-C</strain>
    </source>
</reference>
<proteinExistence type="inferred from homology"/>
<gene>
    <name evidence="1" type="primary">proS</name>
    <name type="ordered locus">RBE_0804</name>
</gene>
<organism>
    <name type="scientific">Rickettsia bellii (strain RML369-C)</name>
    <dbReference type="NCBI Taxonomy" id="336407"/>
    <lineage>
        <taxon>Bacteria</taxon>
        <taxon>Pseudomonadati</taxon>
        <taxon>Pseudomonadota</taxon>
        <taxon>Alphaproteobacteria</taxon>
        <taxon>Rickettsiales</taxon>
        <taxon>Rickettsiaceae</taxon>
        <taxon>Rickettsieae</taxon>
        <taxon>Rickettsia</taxon>
        <taxon>belli group</taxon>
    </lineage>
</organism>
<feature type="chain" id="PRO_0000248914" description="Proline--tRNA ligase">
    <location>
        <begin position="1"/>
        <end position="432"/>
    </location>
</feature>
<keyword id="KW-0030">Aminoacyl-tRNA synthetase</keyword>
<keyword id="KW-0067">ATP-binding</keyword>
<keyword id="KW-0963">Cytoplasm</keyword>
<keyword id="KW-0436">Ligase</keyword>
<keyword id="KW-0547">Nucleotide-binding</keyword>
<keyword id="KW-0648">Protein biosynthesis</keyword>
<name>SYP_RICBR</name>
<evidence type="ECO:0000255" key="1">
    <source>
        <dbReference type="HAMAP-Rule" id="MF_01570"/>
    </source>
</evidence>
<dbReference type="EC" id="6.1.1.15" evidence="1"/>
<dbReference type="EMBL" id="CP000087">
    <property type="protein sequence ID" value="ABE04885.1"/>
    <property type="molecule type" value="Genomic_DNA"/>
</dbReference>
<dbReference type="RefSeq" id="WP_011477472.1">
    <property type="nucleotide sequence ID" value="NC_007940.1"/>
</dbReference>
<dbReference type="SMR" id="Q1RIC9"/>
<dbReference type="KEGG" id="rbe:RBE_0804"/>
<dbReference type="eggNOG" id="COG0442">
    <property type="taxonomic scope" value="Bacteria"/>
</dbReference>
<dbReference type="HOGENOM" id="CLU_016739_4_2_5"/>
<dbReference type="OrthoDB" id="9809052at2"/>
<dbReference type="Proteomes" id="UP000001951">
    <property type="component" value="Chromosome"/>
</dbReference>
<dbReference type="GO" id="GO:0005829">
    <property type="term" value="C:cytosol"/>
    <property type="evidence" value="ECO:0007669"/>
    <property type="project" value="TreeGrafter"/>
</dbReference>
<dbReference type="GO" id="GO:0005524">
    <property type="term" value="F:ATP binding"/>
    <property type="evidence" value="ECO:0007669"/>
    <property type="project" value="UniProtKB-UniRule"/>
</dbReference>
<dbReference type="GO" id="GO:0004827">
    <property type="term" value="F:proline-tRNA ligase activity"/>
    <property type="evidence" value="ECO:0007669"/>
    <property type="project" value="UniProtKB-UniRule"/>
</dbReference>
<dbReference type="GO" id="GO:0006433">
    <property type="term" value="P:prolyl-tRNA aminoacylation"/>
    <property type="evidence" value="ECO:0007669"/>
    <property type="project" value="UniProtKB-UniRule"/>
</dbReference>
<dbReference type="CDD" id="cd00861">
    <property type="entry name" value="ProRS_anticodon_short"/>
    <property type="match status" value="1"/>
</dbReference>
<dbReference type="CDD" id="cd00779">
    <property type="entry name" value="ProRS_core_prok"/>
    <property type="match status" value="1"/>
</dbReference>
<dbReference type="FunFam" id="3.30.930.10:FF:000042">
    <property type="entry name" value="probable proline--tRNA ligase, mitochondrial"/>
    <property type="match status" value="1"/>
</dbReference>
<dbReference type="FunFam" id="3.40.50.800:FF:000032">
    <property type="entry name" value="Proline--tRNA ligase"/>
    <property type="match status" value="1"/>
</dbReference>
<dbReference type="Gene3D" id="3.40.50.800">
    <property type="entry name" value="Anticodon-binding domain"/>
    <property type="match status" value="1"/>
</dbReference>
<dbReference type="Gene3D" id="3.30.930.10">
    <property type="entry name" value="Bira Bifunctional Protein, Domain 2"/>
    <property type="match status" value="1"/>
</dbReference>
<dbReference type="HAMAP" id="MF_01570">
    <property type="entry name" value="Pro_tRNA_synth_type2"/>
    <property type="match status" value="1"/>
</dbReference>
<dbReference type="InterPro" id="IPR002314">
    <property type="entry name" value="aa-tRNA-synt_IIb"/>
</dbReference>
<dbReference type="InterPro" id="IPR006195">
    <property type="entry name" value="aa-tRNA-synth_II"/>
</dbReference>
<dbReference type="InterPro" id="IPR045864">
    <property type="entry name" value="aa-tRNA-synth_II/BPL/LPL"/>
</dbReference>
<dbReference type="InterPro" id="IPR004154">
    <property type="entry name" value="Anticodon-bd"/>
</dbReference>
<dbReference type="InterPro" id="IPR036621">
    <property type="entry name" value="Anticodon-bd_dom_sf"/>
</dbReference>
<dbReference type="InterPro" id="IPR002316">
    <property type="entry name" value="Pro-tRNA-ligase_IIa"/>
</dbReference>
<dbReference type="InterPro" id="IPR004500">
    <property type="entry name" value="Pro-tRNA-synth_IIa_bac-type"/>
</dbReference>
<dbReference type="InterPro" id="IPR050062">
    <property type="entry name" value="Pro-tRNA_synthetase"/>
</dbReference>
<dbReference type="InterPro" id="IPR023716">
    <property type="entry name" value="Prolyl-tRNA_ligase_IIa_type2"/>
</dbReference>
<dbReference type="InterPro" id="IPR044140">
    <property type="entry name" value="ProRS_anticodon_short"/>
</dbReference>
<dbReference type="InterPro" id="IPR033730">
    <property type="entry name" value="ProRS_core_prok"/>
</dbReference>
<dbReference type="NCBIfam" id="NF008979">
    <property type="entry name" value="PRK12325.1"/>
    <property type="match status" value="1"/>
</dbReference>
<dbReference type="NCBIfam" id="TIGR00409">
    <property type="entry name" value="proS_fam_II"/>
    <property type="match status" value="1"/>
</dbReference>
<dbReference type="PANTHER" id="PTHR42753">
    <property type="entry name" value="MITOCHONDRIAL RIBOSOME PROTEIN L39/PROLYL-TRNA LIGASE FAMILY MEMBER"/>
    <property type="match status" value="1"/>
</dbReference>
<dbReference type="PANTHER" id="PTHR42753:SF2">
    <property type="entry name" value="PROLINE--TRNA LIGASE"/>
    <property type="match status" value="1"/>
</dbReference>
<dbReference type="Pfam" id="PF03129">
    <property type="entry name" value="HGTP_anticodon"/>
    <property type="match status" value="1"/>
</dbReference>
<dbReference type="Pfam" id="PF00587">
    <property type="entry name" value="tRNA-synt_2b"/>
    <property type="match status" value="1"/>
</dbReference>
<dbReference type="PRINTS" id="PR01046">
    <property type="entry name" value="TRNASYNTHPRO"/>
</dbReference>
<dbReference type="SUPFAM" id="SSF52954">
    <property type="entry name" value="Class II aaRS ABD-related"/>
    <property type="match status" value="1"/>
</dbReference>
<dbReference type="SUPFAM" id="SSF55681">
    <property type="entry name" value="Class II aaRS and biotin synthetases"/>
    <property type="match status" value="1"/>
</dbReference>
<dbReference type="PROSITE" id="PS50862">
    <property type="entry name" value="AA_TRNA_LIGASE_II"/>
    <property type="match status" value="1"/>
</dbReference>
<accession>Q1RIC9</accession>
<comment type="function">
    <text evidence="1">Catalyzes the attachment of proline to tRNA(Pro) in a two-step reaction: proline is first activated by ATP to form Pro-AMP and then transferred to the acceptor end of tRNA(Pro).</text>
</comment>
<comment type="catalytic activity">
    <reaction evidence="1">
        <text>tRNA(Pro) + L-proline + ATP = L-prolyl-tRNA(Pro) + AMP + diphosphate</text>
        <dbReference type="Rhea" id="RHEA:14305"/>
        <dbReference type="Rhea" id="RHEA-COMP:9700"/>
        <dbReference type="Rhea" id="RHEA-COMP:9702"/>
        <dbReference type="ChEBI" id="CHEBI:30616"/>
        <dbReference type="ChEBI" id="CHEBI:33019"/>
        <dbReference type="ChEBI" id="CHEBI:60039"/>
        <dbReference type="ChEBI" id="CHEBI:78442"/>
        <dbReference type="ChEBI" id="CHEBI:78532"/>
        <dbReference type="ChEBI" id="CHEBI:456215"/>
        <dbReference type="EC" id="6.1.1.15"/>
    </reaction>
</comment>
<comment type="subunit">
    <text evidence="1">Homodimer.</text>
</comment>
<comment type="subcellular location">
    <subcellularLocation>
        <location evidence="1">Cytoplasm</location>
    </subcellularLocation>
</comment>
<comment type="similarity">
    <text evidence="1">Belongs to the class-II aminoacyl-tRNA synthetase family. ProS type 2 subfamily.</text>
</comment>